<name>RL1_SHEDO</name>
<gene>
    <name evidence="1" type="primary">rplA</name>
    <name type="ordered locus">Sden_0160</name>
</gene>
<keyword id="KW-1185">Reference proteome</keyword>
<keyword id="KW-0678">Repressor</keyword>
<keyword id="KW-0687">Ribonucleoprotein</keyword>
<keyword id="KW-0689">Ribosomal protein</keyword>
<keyword id="KW-0694">RNA-binding</keyword>
<keyword id="KW-0699">rRNA-binding</keyword>
<keyword id="KW-0810">Translation regulation</keyword>
<keyword id="KW-0820">tRNA-binding</keyword>
<reference key="1">
    <citation type="submission" date="2006-03" db="EMBL/GenBank/DDBJ databases">
        <title>Complete sequence of Shewanella denitrificans OS217.</title>
        <authorList>
            <consortium name="US DOE Joint Genome Institute"/>
            <person name="Copeland A."/>
            <person name="Lucas S."/>
            <person name="Lapidus A."/>
            <person name="Barry K."/>
            <person name="Detter J.C."/>
            <person name="Glavina del Rio T."/>
            <person name="Hammon N."/>
            <person name="Israni S."/>
            <person name="Dalin E."/>
            <person name="Tice H."/>
            <person name="Pitluck S."/>
            <person name="Brettin T."/>
            <person name="Bruce D."/>
            <person name="Han C."/>
            <person name="Tapia R."/>
            <person name="Gilna P."/>
            <person name="Kiss H."/>
            <person name="Schmutz J."/>
            <person name="Larimer F."/>
            <person name="Land M."/>
            <person name="Hauser L."/>
            <person name="Kyrpides N."/>
            <person name="Lykidis A."/>
            <person name="Richardson P."/>
        </authorList>
    </citation>
    <scope>NUCLEOTIDE SEQUENCE [LARGE SCALE GENOMIC DNA]</scope>
    <source>
        <strain>OS217 / ATCC BAA-1090 / DSM 15013</strain>
    </source>
</reference>
<organism>
    <name type="scientific">Shewanella denitrificans (strain OS217 / ATCC BAA-1090 / DSM 15013)</name>
    <dbReference type="NCBI Taxonomy" id="318161"/>
    <lineage>
        <taxon>Bacteria</taxon>
        <taxon>Pseudomonadati</taxon>
        <taxon>Pseudomonadota</taxon>
        <taxon>Gammaproteobacteria</taxon>
        <taxon>Alteromonadales</taxon>
        <taxon>Shewanellaceae</taxon>
        <taxon>Shewanella</taxon>
    </lineage>
</organism>
<feature type="chain" id="PRO_0000308099" description="Large ribosomal subunit protein uL1">
    <location>
        <begin position="1"/>
        <end position="233"/>
    </location>
</feature>
<proteinExistence type="inferred from homology"/>
<evidence type="ECO:0000255" key="1">
    <source>
        <dbReference type="HAMAP-Rule" id="MF_01318"/>
    </source>
</evidence>
<evidence type="ECO:0000305" key="2"/>
<sequence>MAKLTKRMRVIRDKVDGMKSYDINEAVALLKELATAKFVESVDVAVNLGIDPRKSDQNVRGATVLPHGTGRDVRVAVFTQGANAEAAKAAGAELVGMEELAEQIKAGEMNFDVVIASPDAMRVVGMLGQILGPRGLMPNPKTGTVTPNVAEAVKNAKAGQVRYRNDKNGIIHTTIGKVDFTTEQLKENLEALVSALKKAKPAVAKGVFVKKISISTTMGAGVAVDQATLETAN</sequence>
<dbReference type="EMBL" id="CP000302">
    <property type="protein sequence ID" value="ABE53457.1"/>
    <property type="molecule type" value="Genomic_DNA"/>
</dbReference>
<dbReference type="RefSeq" id="WP_011494626.1">
    <property type="nucleotide sequence ID" value="NC_007954.1"/>
</dbReference>
<dbReference type="SMR" id="Q12SW9"/>
<dbReference type="STRING" id="318161.Sden_0160"/>
<dbReference type="KEGG" id="sdn:Sden_0160"/>
<dbReference type="eggNOG" id="COG0081">
    <property type="taxonomic scope" value="Bacteria"/>
</dbReference>
<dbReference type="HOGENOM" id="CLU_062853_0_0_6"/>
<dbReference type="OrthoDB" id="9803740at2"/>
<dbReference type="Proteomes" id="UP000001982">
    <property type="component" value="Chromosome"/>
</dbReference>
<dbReference type="GO" id="GO:0022625">
    <property type="term" value="C:cytosolic large ribosomal subunit"/>
    <property type="evidence" value="ECO:0007669"/>
    <property type="project" value="TreeGrafter"/>
</dbReference>
<dbReference type="GO" id="GO:0019843">
    <property type="term" value="F:rRNA binding"/>
    <property type="evidence" value="ECO:0007669"/>
    <property type="project" value="UniProtKB-UniRule"/>
</dbReference>
<dbReference type="GO" id="GO:0003735">
    <property type="term" value="F:structural constituent of ribosome"/>
    <property type="evidence" value="ECO:0007669"/>
    <property type="project" value="InterPro"/>
</dbReference>
<dbReference type="GO" id="GO:0000049">
    <property type="term" value="F:tRNA binding"/>
    <property type="evidence" value="ECO:0007669"/>
    <property type="project" value="UniProtKB-KW"/>
</dbReference>
<dbReference type="GO" id="GO:0006417">
    <property type="term" value="P:regulation of translation"/>
    <property type="evidence" value="ECO:0007669"/>
    <property type="project" value="UniProtKB-KW"/>
</dbReference>
<dbReference type="GO" id="GO:0006412">
    <property type="term" value="P:translation"/>
    <property type="evidence" value="ECO:0007669"/>
    <property type="project" value="UniProtKB-UniRule"/>
</dbReference>
<dbReference type="CDD" id="cd00403">
    <property type="entry name" value="Ribosomal_L1"/>
    <property type="match status" value="1"/>
</dbReference>
<dbReference type="FunFam" id="3.40.50.790:FF:000001">
    <property type="entry name" value="50S ribosomal protein L1"/>
    <property type="match status" value="1"/>
</dbReference>
<dbReference type="Gene3D" id="3.30.190.20">
    <property type="match status" value="1"/>
</dbReference>
<dbReference type="Gene3D" id="3.40.50.790">
    <property type="match status" value="1"/>
</dbReference>
<dbReference type="HAMAP" id="MF_01318_B">
    <property type="entry name" value="Ribosomal_uL1_B"/>
    <property type="match status" value="1"/>
</dbReference>
<dbReference type="InterPro" id="IPR005878">
    <property type="entry name" value="Ribosom_uL1_bac-type"/>
</dbReference>
<dbReference type="InterPro" id="IPR002143">
    <property type="entry name" value="Ribosomal_uL1"/>
</dbReference>
<dbReference type="InterPro" id="IPR023674">
    <property type="entry name" value="Ribosomal_uL1-like"/>
</dbReference>
<dbReference type="InterPro" id="IPR028364">
    <property type="entry name" value="Ribosomal_uL1/biogenesis"/>
</dbReference>
<dbReference type="InterPro" id="IPR016095">
    <property type="entry name" value="Ribosomal_uL1_3-a/b-sand"/>
</dbReference>
<dbReference type="InterPro" id="IPR023673">
    <property type="entry name" value="Ribosomal_uL1_CS"/>
</dbReference>
<dbReference type="NCBIfam" id="TIGR01169">
    <property type="entry name" value="rplA_bact"/>
    <property type="match status" value="1"/>
</dbReference>
<dbReference type="PANTHER" id="PTHR36427">
    <property type="entry name" value="54S RIBOSOMAL PROTEIN L1, MITOCHONDRIAL"/>
    <property type="match status" value="1"/>
</dbReference>
<dbReference type="PANTHER" id="PTHR36427:SF3">
    <property type="entry name" value="LARGE RIBOSOMAL SUBUNIT PROTEIN UL1M"/>
    <property type="match status" value="1"/>
</dbReference>
<dbReference type="Pfam" id="PF00687">
    <property type="entry name" value="Ribosomal_L1"/>
    <property type="match status" value="1"/>
</dbReference>
<dbReference type="PIRSF" id="PIRSF002155">
    <property type="entry name" value="Ribosomal_L1"/>
    <property type="match status" value="1"/>
</dbReference>
<dbReference type="SUPFAM" id="SSF56808">
    <property type="entry name" value="Ribosomal protein L1"/>
    <property type="match status" value="1"/>
</dbReference>
<dbReference type="PROSITE" id="PS01199">
    <property type="entry name" value="RIBOSOMAL_L1"/>
    <property type="match status" value="1"/>
</dbReference>
<comment type="function">
    <text evidence="1">Binds directly to 23S rRNA. The L1 stalk is quite mobile in the ribosome, and is involved in E site tRNA release.</text>
</comment>
<comment type="function">
    <text evidence="1">Protein L1 is also a translational repressor protein, it controls the translation of the L11 operon by binding to its mRNA.</text>
</comment>
<comment type="subunit">
    <text evidence="1">Part of the 50S ribosomal subunit.</text>
</comment>
<comment type="similarity">
    <text evidence="1">Belongs to the universal ribosomal protein uL1 family.</text>
</comment>
<accession>Q12SW9</accession>
<protein>
    <recommendedName>
        <fullName evidence="1">Large ribosomal subunit protein uL1</fullName>
    </recommendedName>
    <alternativeName>
        <fullName evidence="2">50S ribosomal protein L1</fullName>
    </alternativeName>
</protein>